<proteinExistence type="evidence at protein level"/>
<accession>P0DL57</accession>
<keyword id="KW-0027">Amidation</keyword>
<keyword id="KW-0123">Cardiotoxin</keyword>
<keyword id="KW-0903">Direct protein sequencing</keyword>
<keyword id="KW-1015">Disulfide bond</keyword>
<keyword id="KW-0872">Ion channel impairing toxin</keyword>
<keyword id="KW-0960">Knottin</keyword>
<keyword id="KW-0528">Neurotoxin</keyword>
<keyword id="KW-0964">Secreted</keyword>
<keyword id="KW-0732">Signal</keyword>
<keyword id="KW-0800">Toxin</keyword>
<keyword id="KW-0738">Voltage-gated sodium channel impairing toxin</keyword>
<protein>
    <recommendedName>
        <fullName evidence="4">Mu-theraphotoxin-Phlo1a</fullName>
        <shortName evidence="4">Mu-TRTX-Phlo1a</shortName>
    </recommendedName>
</protein>
<sequence length="89" mass="10085">MKVSVLITLAVLGVMFVWTSAAEQEDHGSDRRDSPALLKNLLGEEVFQSEERACRELLGGCSKDSDCCAHLECRKKWPYHCVWDWTIGK</sequence>
<comment type="function">
    <text evidence="3">Gating-modifier toxin that inhibits voltage-gated sodium channel Nav by shifting the threshold for channel activation to more positive potentials. This toxin moderately inhibits human Nav1.7/SCN9A (IC(50)=459 nM) and weakly inhibits hNav1.2/SCN2A and hNav1.5/SCN5A (&lt;20% inhibition at 1 uM peptide). Inhibition of Nav1.7 is voltage-dependent, with lower inhibition at more positive test pulses.</text>
</comment>
<comment type="subcellular location">
    <subcellularLocation>
        <location evidence="3">Secreted</location>
    </subcellularLocation>
</comment>
<comment type="tissue specificity">
    <text evidence="6">Expressed by the venom gland.</text>
</comment>
<comment type="domain">
    <text evidence="6">The presence of a 'disulfide through disulfide knot' structurally defines this protein as a knottin.</text>
</comment>
<comment type="mass spectrometry" mass="4105.04" method="MALDI" evidence="3">
    <text>Monoisotopic mass.</text>
</comment>
<comment type="similarity">
    <text evidence="5">Belongs to the neurotoxin 10 (Hwtx-1) family. 39 (Jztx-34) subfamily.</text>
</comment>
<organism>
    <name type="scientific">Phlogius sp.</name>
    <name type="common">Tarantula spider</name>
    <dbReference type="NCBI Taxonomy" id="1690075"/>
    <lineage>
        <taxon>Eukaryota</taxon>
        <taxon>Metazoa</taxon>
        <taxon>Ecdysozoa</taxon>
        <taxon>Arthropoda</taxon>
        <taxon>Chelicerata</taxon>
        <taxon>Arachnida</taxon>
        <taxon>Araneae</taxon>
        <taxon>Mygalomorphae</taxon>
        <taxon>Theraphosidae</taxon>
        <taxon>Phlogius</taxon>
    </lineage>
</organism>
<name>HM1A_PHLSP</name>
<reference key="1">
    <citation type="journal article" date="2015" name="Toxins">
        <title>Three peptide modulators of the human voltage-gated sodium channel 1.7, an important analgesic target, from the venom of an Australian tarantula.</title>
        <authorList>
            <person name="Chow C.Y."/>
            <person name="Cristofori-Armstrong B."/>
            <person name="Undheim E.A."/>
            <person name="King G.F."/>
            <person name="Rash L.D."/>
        </authorList>
    </citation>
    <scope>NUCLEOTIDE SEQUENCE [MRNA]</scope>
    <scope>PROTEIN SEQUENCE OF 56-87</scope>
    <scope>FUNCTION</scope>
    <scope>MASS SPECTROMETRY</scope>
    <scope>AMIDATION AT ILE-87</scope>
    <scope>SUBCELLULAR LOCATION</scope>
    <source>
        <tissue>Venom</tissue>
        <tissue>Venom gland</tissue>
    </source>
</reference>
<evidence type="ECO:0000250" key="1">
    <source>
        <dbReference type="UniProtKB" id="P0C247"/>
    </source>
</evidence>
<evidence type="ECO:0000255" key="2"/>
<evidence type="ECO:0000269" key="3">
    <source>
    </source>
</evidence>
<evidence type="ECO:0000303" key="4">
    <source>
    </source>
</evidence>
<evidence type="ECO:0000305" key="5"/>
<evidence type="ECO:0000305" key="6">
    <source>
    </source>
</evidence>
<feature type="signal peptide" evidence="2">
    <location>
        <begin position="1"/>
        <end position="22"/>
    </location>
</feature>
<feature type="propeptide" id="PRO_0000434301" evidence="3">
    <location>
        <begin position="23"/>
        <end position="52"/>
    </location>
</feature>
<feature type="chain" id="PRO_0000434302" description="Mu-theraphotoxin-Phlo1a" evidence="3">
    <location>
        <begin position="53"/>
        <end position="87"/>
    </location>
</feature>
<feature type="modified residue" description="Isoleucine amide" evidence="3">
    <location>
        <position position="87"/>
    </location>
</feature>
<feature type="disulfide bond" evidence="1">
    <location>
        <begin position="54"/>
        <end position="68"/>
    </location>
</feature>
<feature type="disulfide bond" evidence="1">
    <location>
        <begin position="61"/>
        <end position="73"/>
    </location>
</feature>
<feature type="disulfide bond" evidence="1">
    <location>
        <begin position="67"/>
        <end position="81"/>
    </location>
</feature>
<dbReference type="SMR" id="P0DL57"/>
<dbReference type="GO" id="GO:0005576">
    <property type="term" value="C:extracellular region"/>
    <property type="evidence" value="ECO:0007669"/>
    <property type="project" value="UniProtKB-SubCell"/>
</dbReference>
<dbReference type="GO" id="GO:0008200">
    <property type="term" value="F:ion channel inhibitor activity"/>
    <property type="evidence" value="ECO:0007669"/>
    <property type="project" value="InterPro"/>
</dbReference>
<dbReference type="GO" id="GO:0017080">
    <property type="term" value="F:sodium channel regulator activity"/>
    <property type="evidence" value="ECO:0007669"/>
    <property type="project" value="UniProtKB-KW"/>
</dbReference>
<dbReference type="GO" id="GO:0090729">
    <property type="term" value="F:toxin activity"/>
    <property type="evidence" value="ECO:0007669"/>
    <property type="project" value="UniProtKB-KW"/>
</dbReference>
<dbReference type="InterPro" id="IPR011696">
    <property type="entry name" value="Huwentoxin-1"/>
</dbReference>
<dbReference type="Pfam" id="PF07740">
    <property type="entry name" value="Toxin_12"/>
    <property type="match status" value="1"/>
</dbReference>
<dbReference type="SUPFAM" id="SSF57059">
    <property type="entry name" value="omega toxin-like"/>
    <property type="match status" value="1"/>
</dbReference>